<reference key="1">
    <citation type="submission" date="1997-03" db="EMBL/GenBank/DDBJ databases">
        <title>Cloning and sequence analysis of killer whale (Orcinus orca) interleukin-10.</title>
        <authorList>
            <person name="Herrman J.M."/>
            <person name="King D.P."/>
            <person name="Ferrick D.A."/>
        </authorList>
    </citation>
    <scope>NUCLEOTIDE SEQUENCE [MRNA]</scope>
</reference>
<sequence length="164" mass="18823">MPSSALLCCLIFLARVAAGQHQGTQAKDSCIHFPDSLPHMLRELRAAFSNVKTFFQMNDQLDNSLLSQSLLEDFKGYLGCQALSEMIQFYLEEVMPKAEDHGPNIKEHVNSLGEKLKTLRLRLRRCHRFLPCENKSKAVEQVKSVFNKLQEKGVYKAMREFDIF</sequence>
<keyword id="KW-0202">Cytokine</keyword>
<keyword id="KW-1015">Disulfide bond</keyword>
<keyword id="KW-0325">Glycoprotein</keyword>
<keyword id="KW-0964">Secreted</keyword>
<keyword id="KW-0732">Signal</keyword>
<gene>
    <name type="primary">IL10</name>
</gene>
<evidence type="ECO:0000250" key="1"/>
<evidence type="ECO:0000250" key="2">
    <source>
        <dbReference type="UniProtKB" id="P18893"/>
    </source>
</evidence>
<evidence type="ECO:0000250" key="3">
    <source>
        <dbReference type="UniProtKB" id="P22301"/>
    </source>
</evidence>
<evidence type="ECO:0000255" key="4"/>
<evidence type="ECO:0000305" key="5"/>
<protein>
    <recommendedName>
        <fullName>Interleukin-10</fullName>
        <shortName>IL-10</shortName>
    </recommendedName>
    <alternativeName>
        <fullName>Cytokine synthesis inhibitory factor</fullName>
        <shortName>CSIF</shortName>
    </alternativeName>
</protein>
<accession>O46673</accession>
<name>IL10_ORCOR</name>
<comment type="function">
    <text evidence="2 3">Major immune regulatory cytokine that acts on many cells of the immune system where it has profound anti-inflammatory functions, limiting excessive tissue disruption caused by inflammation. Mechanistically, IL10 binds to its heterotetrameric receptor comprising IL10RA and IL10RB leading to JAK1 and STAT2-mediated phosphorylation of STAT3. In turn, STAT3 translocates to the nucleus where it drives expression of anti-inflammatory mediators. Targets antigen-presenting cells (APCs) such as macrophages and monocytes and inhibits their release of pro-inflammatory cytokines including granulocyte-macrophage colony-stimulating factor /GM-CSF, granulocyte colony-stimulating factor/G-CSF, IL-1 alpha, IL-1 beta, IL-6, IL-8 and TNF-alpha. Also interferes with antigen presentation by reducing the expression of MHC-class II and co-stimulatory molecules, thereby inhibiting their ability to induce T cell activation (By similarity). In addition, controls the inflammatory response of macrophages by reprogramming essential metabolic pathways including mTOR signaling (By similarity).</text>
</comment>
<comment type="subunit">
    <text evidence="3">Homodimer. Interacts with IL10RA and IL10RB.</text>
</comment>
<comment type="subcellular location">
    <subcellularLocation>
        <location evidence="3">Secreted</location>
    </subcellularLocation>
</comment>
<comment type="similarity">
    <text evidence="5">Belongs to the IL-10 family.</text>
</comment>
<comment type="sequence caution" evidence="5">
    <conflict type="erroneous initiation">
        <sequence resource="EMBL-CDS" id="AAB93888"/>
    </conflict>
</comment>
<feature type="signal peptide" evidence="4">
    <location>
        <begin position="1"/>
        <end position="18"/>
    </location>
</feature>
<feature type="chain" id="PRO_0000015368" description="Interleukin-10">
    <location>
        <begin position="19"/>
        <end position="164" status="greater than"/>
    </location>
</feature>
<feature type="glycosylation site" description="N-linked (GlcNAc...) asparagine" evidence="4">
    <location>
        <position position="134"/>
    </location>
</feature>
<feature type="disulfide bond" evidence="1">
    <location>
        <begin position="30"/>
        <end position="126"/>
    </location>
</feature>
<feature type="disulfide bond" evidence="1">
    <location>
        <begin position="80"/>
        <end position="132"/>
    </location>
</feature>
<feature type="non-terminal residue">
    <location>
        <position position="164"/>
    </location>
</feature>
<dbReference type="EMBL" id="U93260">
    <property type="protein sequence ID" value="AAB93888.1"/>
    <property type="status" value="ALT_INIT"/>
    <property type="molecule type" value="mRNA"/>
</dbReference>
<dbReference type="SMR" id="O46673"/>
<dbReference type="GlyCosmos" id="O46673">
    <property type="glycosylation" value="1 site, No reported glycans"/>
</dbReference>
<dbReference type="GO" id="GO:0005615">
    <property type="term" value="C:extracellular space"/>
    <property type="evidence" value="ECO:0007669"/>
    <property type="project" value="UniProtKB-KW"/>
</dbReference>
<dbReference type="GO" id="GO:0005125">
    <property type="term" value="F:cytokine activity"/>
    <property type="evidence" value="ECO:0007669"/>
    <property type="project" value="UniProtKB-KW"/>
</dbReference>
<dbReference type="GO" id="GO:0006955">
    <property type="term" value="P:immune response"/>
    <property type="evidence" value="ECO:0007669"/>
    <property type="project" value="InterPro"/>
</dbReference>
<dbReference type="GO" id="GO:0001817">
    <property type="term" value="P:regulation of cytokine production"/>
    <property type="evidence" value="ECO:0007669"/>
    <property type="project" value="UniProtKB-ARBA"/>
</dbReference>
<dbReference type="FunFam" id="1.20.1250.10:FF:000011">
    <property type="entry name" value="Interleukin-10"/>
    <property type="match status" value="1"/>
</dbReference>
<dbReference type="Gene3D" id="1.20.1250.10">
    <property type="match status" value="1"/>
</dbReference>
<dbReference type="InterPro" id="IPR009079">
    <property type="entry name" value="4_helix_cytokine-like_core"/>
</dbReference>
<dbReference type="InterPro" id="IPR000098">
    <property type="entry name" value="IL-10"/>
</dbReference>
<dbReference type="InterPro" id="IPR020443">
    <property type="entry name" value="IL-10/19/20/24/26"/>
</dbReference>
<dbReference type="InterPro" id="IPR020423">
    <property type="entry name" value="IL-10_CS"/>
</dbReference>
<dbReference type="PANTHER" id="PTHR48482:SF5">
    <property type="entry name" value="INTERLEUKIN-10"/>
    <property type="match status" value="1"/>
</dbReference>
<dbReference type="PANTHER" id="PTHR48482">
    <property type="entry name" value="INTERLEUKIN-19-RELATED"/>
    <property type="match status" value="1"/>
</dbReference>
<dbReference type="Pfam" id="PF00726">
    <property type="entry name" value="IL10"/>
    <property type="match status" value="1"/>
</dbReference>
<dbReference type="PRINTS" id="PR01294">
    <property type="entry name" value="INTRLEUKIN10"/>
</dbReference>
<dbReference type="SMART" id="SM00188">
    <property type="entry name" value="IL10"/>
    <property type="match status" value="1"/>
</dbReference>
<dbReference type="SUPFAM" id="SSF47266">
    <property type="entry name" value="4-helical cytokines"/>
    <property type="match status" value="1"/>
</dbReference>
<dbReference type="PROSITE" id="PS00520">
    <property type="entry name" value="INTERLEUKIN_10"/>
    <property type="match status" value="1"/>
</dbReference>
<proteinExistence type="evidence at transcript level"/>
<organism>
    <name type="scientific">Orcinus orca</name>
    <name type="common">Killer whale</name>
    <name type="synonym">Delphinus orca</name>
    <dbReference type="NCBI Taxonomy" id="9733"/>
    <lineage>
        <taxon>Eukaryota</taxon>
        <taxon>Metazoa</taxon>
        <taxon>Chordata</taxon>
        <taxon>Craniata</taxon>
        <taxon>Vertebrata</taxon>
        <taxon>Euteleostomi</taxon>
        <taxon>Mammalia</taxon>
        <taxon>Eutheria</taxon>
        <taxon>Laurasiatheria</taxon>
        <taxon>Artiodactyla</taxon>
        <taxon>Whippomorpha</taxon>
        <taxon>Cetacea</taxon>
        <taxon>Odontoceti</taxon>
        <taxon>Delphinidae</taxon>
        <taxon>Orcinus</taxon>
    </lineage>
</organism>